<proteinExistence type="predicted"/>
<protein>
    <recommendedName>
        <fullName>Uncharacterized protein MT1419</fullName>
    </recommendedName>
</protein>
<gene>
    <name type="ordered locus">MT1419</name>
</gene>
<evidence type="ECO:0000255" key="1">
    <source>
        <dbReference type="PROSITE-ProRule" id="PRU00999"/>
    </source>
</evidence>
<accession>P9WF26</accession>
<accession>L0T976</accession>
<accession>P71803</accession>
<sequence>MTGRRLARFPAFRAGVAQDDDVGSTLSQGSTTGVLSGPNWSYWPSRVLGSADPTTIAHRHGTHRITSPDETWLALQPFLAPAGITGVADVTWLDCLGIPTVQAVRPASLTLSVSQGKAASYRAAQVSAVMESLEGWHAENVTADLWSATARDLEADLTYDPAQLRHRPGSLYHAGVKLDWMVATTLLTGRRTWVPWTAVLVNVATRDCWEPPMFEMDTTGLASGNCYDEATLHALYEVMERHSVAAAVAGETMFEVPTDDVAGSDSAHLVEMIRDAGDDVDLARIDVWDGYYCFAAELTSATLEVTFGGFGLHHDPNVALSRAITEAAQSRITAISGAREDLPSAIYHRFGRVHTYAKARKTSLRLNRARPTPWRVPDVDSLPELVASAATAVANRSGTEPLAVVCDFADACVPVVKVLAPGLVLSSASPMRTPLQEAE</sequence>
<keyword id="KW-1185">Reference proteome</keyword>
<reference key="1">
    <citation type="journal article" date="2002" name="J. Bacteriol.">
        <title>Whole-genome comparison of Mycobacterium tuberculosis clinical and laboratory strains.</title>
        <authorList>
            <person name="Fleischmann R.D."/>
            <person name="Alland D."/>
            <person name="Eisen J.A."/>
            <person name="Carpenter L."/>
            <person name="White O."/>
            <person name="Peterson J.D."/>
            <person name="DeBoy R.T."/>
            <person name="Dodson R.J."/>
            <person name="Gwinn M.L."/>
            <person name="Haft D.H."/>
            <person name="Hickey E.K."/>
            <person name="Kolonay J.F."/>
            <person name="Nelson W.C."/>
            <person name="Umayam L.A."/>
            <person name="Ermolaeva M.D."/>
            <person name="Salzberg S.L."/>
            <person name="Delcher A."/>
            <person name="Utterback T.R."/>
            <person name="Weidman J.F."/>
            <person name="Khouri H.M."/>
            <person name="Gill J."/>
            <person name="Mikula A."/>
            <person name="Bishai W."/>
            <person name="Jacobs W.R. Jr."/>
            <person name="Venter J.C."/>
            <person name="Fraser C.M."/>
        </authorList>
    </citation>
    <scope>NUCLEOTIDE SEQUENCE [LARGE SCALE GENOMIC DNA]</scope>
    <source>
        <strain>CDC 1551 / Oshkosh</strain>
    </source>
</reference>
<dbReference type="EMBL" id="AE000516">
    <property type="protein sequence ID" value="AAK45684.1"/>
    <property type="molecule type" value="Genomic_DNA"/>
</dbReference>
<dbReference type="PIR" id="D70958">
    <property type="entry name" value="D70958"/>
</dbReference>
<dbReference type="RefSeq" id="WP_003898850.1">
    <property type="nucleotide sequence ID" value="NZ_KK341227.1"/>
</dbReference>
<dbReference type="SMR" id="P9WF26"/>
<dbReference type="KEGG" id="mtc:MT1419"/>
<dbReference type="PATRIC" id="fig|83331.31.peg.1526"/>
<dbReference type="HOGENOM" id="CLU_056369_0_0_11"/>
<dbReference type="Proteomes" id="UP000001020">
    <property type="component" value="Chromosome"/>
</dbReference>
<dbReference type="Gene3D" id="3.30.1330.230">
    <property type="match status" value="1"/>
</dbReference>
<dbReference type="InterPro" id="IPR003776">
    <property type="entry name" value="YcaO-like_dom"/>
</dbReference>
<dbReference type="NCBIfam" id="TIGR00702">
    <property type="entry name" value="YcaO-type kinase domain"/>
    <property type="match status" value="1"/>
</dbReference>
<dbReference type="PANTHER" id="PTHR37809">
    <property type="entry name" value="RIBOSOMAL PROTEIN S12 METHYLTHIOTRANSFERASE ACCESSORY FACTOR YCAO"/>
    <property type="match status" value="1"/>
</dbReference>
<dbReference type="PANTHER" id="PTHR37809:SF1">
    <property type="entry name" value="RIBOSOMAL PROTEIN S12 METHYLTHIOTRANSFERASE ACCESSORY FACTOR YCAO"/>
    <property type="match status" value="1"/>
</dbReference>
<dbReference type="Pfam" id="PF02624">
    <property type="entry name" value="YcaO"/>
    <property type="match status" value="1"/>
</dbReference>
<dbReference type="PROSITE" id="PS51664">
    <property type="entry name" value="YCAO"/>
    <property type="match status" value="1"/>
</dbReference>
<name>Y1375_MYCTO</name>
<feature type="chain" id="PRO_0000428612" description="Uncharacterized protein MT1419">
    <location>
        <begin position="1"/>
        <end position="439"/>
    </location>
</feature>
<feature type="domain" description="YcaO" evidence="1">
    <location>
        <begin position="116"/>
        <end position="439"/>
    </location>
</feature>
<organism>
    <name type="scientific">Mycobacterium tuberculosis (strain CDC 1551 / Oshkosh)</name>
    <dbReference type="NCBI Taxonomy" id="83331"/>
    <lineage>
        <taxon>Bacteria</taxon>
        <taxon>Bacillati</taxon>
        <taxon>Actinomycetota</taxon>
        <taxon>Actinomycetes</taxon>
        <taxon>Mycobacteriales</taxon>
        <taxon>Mycobacteriaceae</taxon>
        <taxon>Mycobacterium</taxon>
        <taxon>Mycobacterium tuberculosis complex</taxon>
    </lineage>
</organism>